<evidence type="ECO:0000250" key="1"/>
<evidence type="ECO:0000255" key="2"/>
<evidence type="ECO:0000305" key="3"/>
<name>AIM14_CLAL4</name>
<sequence>MTTSKIGVRHAGHGHTVNIKYGYIIFGVSVLYALLLASAHFLELRQWRRQKRPSRSSVWARINNAPFWVHTLLWAAIVVGLAFTNVHDLSQNWTVVVKRLGRLAFCLVPLDLALALRPCLLGQSYLELMPLHKWLSRLIILAGVVHGIGFFVKWTIHHQLGKAKRWANLAGIIVALFSVLLVIVSSRPVRRRFYSYFYAFHNFTVALFVLLMIWHARPGVSDFVLLSVALLLFQGASRVYNGYSVPGLTIVDADAASLRLLRLQKPNSFPSVWQPGSHIRVGLPLSSWQSWVFPAHLYTLCSSPANDTLNLVVKKGRRFEMLTSLEYRVSCPYASLPTPWLSTAENVHIVCGGSGISLGIPLYEYFDNKSSVLANLHWCVSNARDTFVLSELGVNNPVNVYVTSGKIDQSSYDDADNEDAGLLGAGDNIELEPIPAENKSNPFTDDHAVNCAEQRIQMHAGRPNLSEILASFSETDDNAHKLLIVCGPVGLIRDVRAYGDAHGIAVFSELYNM</sequence>
<organism>
    <name type="scientific">Clavispora lusitaniae (strain ATCC 42720)</name>
    <name type="common">Yeast</name>
    <name type="synonym">Candida lusitaniae</name>
    <dbReference type="NCBI Taxonomy" id="306902"/>
    <lineage>
        <taxon>Eukaryota</taxon>
        <taxon>Fungi</taxon>
        <taxon>Dikarya</taxon>
        <taxon>Ascomycota</taxon>
        <taxon>Saccharomycotina</taxon>
        <taxon>Pichiomycetes</taxon>
        <taxon>Metschnikowiaceae</taxon>
        <taxon>Clavispora</taxon>
    </lineage>
</organism>
<feature type="chain" id="PRO_0000408743" description="Probable metalloreductase AIM14">
    <location>
        <begin position="1"/>
        <end position="513"/>
    </location>
</feature>
<feature type="transmembrane region" description="Helical" evidence="2">
    <location>
        <begin position="22"/>
        <end position="42"/>
    </location>
</feature>
<feature type="transmembrane region" description="Helical" evidence="2">
    <location>
        <begin position="66"/>
        <end position="86"/>
    </location>
</feature>
<feature type="transmembrane region" description="Helical" evidence="2">
    <location>
        <begin position="103"/>
        <end position="123"/>
    </location>
</feature>
<feature type="transmembrane region" description="Helical" evidence="2">
    <location>
        <begin position="138"/>
        <end position="158"/>
    </location>
</feature>
<feature type="transmembrane region" description="Helical" evidence="2">
    <location>
        <begin position="166"/>
        <end position="186"/>
    </location>
</feature>
<feature type="transmembrane region" description="Helical" evidence="2">
    <location>
        <begin position="193"/>
        <end position="213"/>
    </location>
</feature>
<feature type="transmembrane region" description="Helical" evidence="2">
    <location>
        <begin position="219"/>
        <end position="239"/>
    </location>
</feature>
<feature type="domain" description="Ferric oxidoreductase">
    <location>
        <begin position="100"/>
        <end position="211"/>
    </location>
</feature>
<feature type="domain" description="FAD-binding FR-type">
    <location>
        <begin position="240"/>
        <end position="368"/>
    </location>
</feature>
<keyword id="KW-0249">Electron transport</keyword>
<keyword id="KW-0274">FAD</keyword>
<keyword id="KW-0285">Flavoprotein</keyword>
<keyword id="KW-0406">Ion transport</keyword>
<keyword id="KW-0472">Membrane</keyword>
<keyword id="KW-0521">NADP</keyword>
<keyword id="KW-0560">Oxidoreductase</keyword>
<keyword id="KW-1185">Reference proteome</keyword>
<keyword id="KW-0812">Transmembrane</keyword>
<keyword id="KW-1133">Transmembrane helix</keyword>
<keyword id="KW-0813">Transport</keyword>
<accession>C4Y9R6</accession>
<comment type="function">
    <text evidence="1">Probable cell surface metalloreductase. May be involved in iron or copper homeostasis (By similarity).</text>
</comment>
<comment type="subcellular location">
    <subcellularLocation>
        <location evidence="1">Membrane</location>
        <topology evidence="1">Multi-pass membrane protein</topology>
    </subcellularLocation>
</comment>
<comment type="similarity">
    <text evidence="3">Belongs to the ferric reductase (FRE) family. AIM14 subfamily.</text>
</comment>
<dbReference type="EC" id="1.16.1.-"/>
<dbReference type="EMBL" id="CH408081">
    <property type="protein sequence ID" value="EEQ41009.1"/>
    <property type="molecule type" value="Genomic_DNA"/>
</dbReference>
<dbReference type="RefSeq" id="XP_002615122.1">
    <property type="nucleotide sequence ID" value="XM_002615076.1"/>
</dbReference>
<dbReference type="SMR" id="C4Y9R6"/>
<dbReference type="FunCoup" id="C4Y9R6">
    <property type="interactions" value="16"/>
</dbReference>
<dbReference type="GeneID" id="8495554"/>
<dbReference type="KEGG" id="clu:CLUG_05137"/>
<dbReference type="VEuPathDB" id="FungiDB:CLUG_05137"/>
<dbReference type="HOGENOM" id="CLU_036508_0_0_1"/>
<dbReference type="InParanoid" id="C4Y9R6"/>
<dbReference type="OMA" id="GRMAYCL"/>
<dbReference type="OrthoDB" id="35171at4891"/>
<dbReference type="Proteomes" id="UP000007703">
    <property type="component" value="Unassembled WGS sequence"/>
</dbReference>
<dbReference type="GO" id="GO:0005886">
    <property type="term" value="C:plasma membrane"/>
    <property type="evidence" value="ECO:0007669"/>
    <property type="project" value="TreeGrafter"/>
</dbReference>
<dbReference type="GO" id="GO:0000293">
    <property type="term" value="F:ferric-chelate reductase activity"/>
    <property type="evidence" value="ECO:0007669"/>
    <property type="project" value="TreeGrafter"/>
</dbReference>
<dbReference type="GO" id="GO:0033215">
    <property type="term" value="P:reductive iron assimilation"/>
    <property type="evidence" value="ECO:0007669"/>
    <property type="project" value="TreeGrafter"/>
</dbReference>
<dbReference type="Gene3D" id="3.40.50.80">
    <property type="entry name" value="Nucleotide-binding domain of ferredoxin-NADP reductase (FNR) module"/>
    <property type="match status" value="1"/>
</dbReference>
<dbReference type="InterPro" id="IPR013112">
    <property type="entry name" value="FAD-bd_8"/>
</dbReference>
<dbReference type="InterPro" id="IPR013130">
    <property type="entry name" value="Fe3_Rdtase_TM_dom"/>
</dbReference>
<dbReference type="InterPro" id="IPR013121">
    <property type="entry name" value="Fe_red_NAD-bd_6"/>
</dbReference>
<dbReference type="InterPro" id="IPR039261">
    <property type="entry name" value="FNR_nucleotide-bd"/>
</dbReference>
<dbReference type="InterPro" id="IPR050369">
    <property type="entry name" value="RBOH/FRE"/>
</dbReference>
<dbReference type="PANTHER" id="PTHR11972:SF198">
    <property type="entry name" value="METALLOREDUCTASE AIM14-RELATED"/>
    <property type="match status" value="1"/>
</dbReference>
<dbReference type="PANTHER" id="PTHR11972">
    <property type="entry name" value="NADPH OXIDASE"/>
    <property type="match status" value="1"/>
</dbReference>
<dbReference type="Pfam" id="PF08022">
    <property type="entry name" value="FAD_binding_8"/>
    <property type="match status" value="1"/>
</dbReference>
<dbReference type="Pfam" id="PF01794">
    <property type="entry name" value="Ferric_reduct"/>
    <property type="match status" value="1"/>
</dbReference>
<dbReference type="Pfam" id="PF08030">
    <property type="entry name" value="NAD_binding_6"/>
    <property type="match status" value="1"/>
</dbReference>
<dbReference type="SFLD" id="SFLDF00463">
    <property type="entry name" value="AIM14"/>
    <property type="match status" value="1"/>
</dbReference>
<dbReference type="SFLD" id="SFLDS00052">
    <property type="entry name" value="Ferric_Reductase_Domain"/>
    <property type="match status" value="1"/>
</dbReference>
<dbReference type="SFLD" id="SFLDG01168">
    <property type="entry name" value="Ferric_reductase_subgroup_(FRE"/>
    <property type="match status" value="1"/>
</dbReference>
<dbReference type="SUPFAM" id="SSF52343">
    <property type="entry name" value="Ferredoxin reductase-like, C-terminal NADP-linked domain"/>
    <property type="match status" value="1"/>
</dbReference>
<gene>
    <name type="primary">AIM14</name>
    <name type="ORF">CLUG_05137</name>
</gene>
<proteinExistence type="inferred from homology"/>
<protein>
    <recommendedName>
        <fullName>Probable metalloreductase AIM14</fullName>
        <ecNumber>1.16.1.-</ecNumber>
    </recommendedName>
</protein>
<reference key="1">
    <citation type="journal article" date="2009" name="Nature">
        <title>Evolution of pathogenicity and sexual reproduction in eight Candida genomes.</title>
        <authorList>
            <person name="Butler G."/>
            <person name="Rasmussen M.D."/>
            <person name="Lin M.F."/>
            <person name="Santos M.A.S."/>
            <person name="Sakthikumar S."/>
            <person name="Munro C.A."/>
            <person name="Rheinbay E."/>
            <person name="Grabherr M."/>
            <person name="Forche A."/>
            <person name="Reedy J.L."/>
            <person name="Agrafioti I."/>
            <person name="Arnaud M.B."/>
            <person name="Bates S."/>
            <person name="Brown A.J.P."/>
            <person name="Brunke S."/>
            <person name="Costanzo M.C."/>
            <person name="Fitzpatrick D.A."/>
            <person name="de Groot P.W.J."/>
            <person name="Harris D."/>
            <person name="Hoyer L.L."/>
            <person name="Hube B."/>
            <person name="Klis F.M."/>
            <person name="Kodira C."/>
            <person name="Lennard N."/>
            <person name="Logue M.E."/>
            <person name="Martin R."/>
            <person name="Neiman A.M."/>
            <person name="Nikolaou E."/>
            <person name="Quail M.A."/>
            <person name="Quinn J."/>
            <person name="Santos M.C."/>
            <person name="Schmitzberger F.F."/>
            <person name="Sherlock G."/>
            <person name="Shah P."/>
            <person name="Silverstein K.A.T."/>
            <person name="Skrzypek M.S."/>
            <person name="Soll D."/>
            <person name="Staggs R."/>
            <person name="Stansfield I."/>
            <person name="Stumpf M.P.H."/>
            <person name="Sudbery P.E."/>
            <person name="Srikantha T."/>
            <person name="Zeng Q."/>
            <person name="Berman J."/>
            <person name="Berriman M."/>
            <person name="Heitman J."/>
            <person name="Gow N.A.R."/>
            <person name="Lorenz M.C."/>
            <person name="Birren B.W."/>
            <person name="Kellis M."/>
            <person name="Cuomo C.A."/>
        </authorList>
    </citation>
    <scope>NUCLEOTIDE SEQUENCE [LARGE SCALE GENOMIC DNA]</scope>
    <source>
        <strain>ATCC 42720</strain>
    </source>
</reference>